<evidence type="ECO:0000255" key="1">
    <source>
        <dbReference type="HAMAP-Rule" id="MF_01041"/>
    </source>
</evidence>
<accession>A2RIM4</accession>
<dbReference type="EMBL" id="AM406671">
    <property type="protein sequence ID" value="CAL97119.1"/>
    <property type="molecule type" value="Genomic_DNA"/>
</dbReference>
<dbReference type="RefSeq" id="WP_011675557.1">
    <property type="nucleotide sequence ID" value="NC_009004.1"/>
</dbReference>
<dbReference type="SMR" id="A2RIM4"/>
<dbReference type="STRING" id="416870.llmg_0515"/>
<dbReference type="KEGG" id="llm:llmg_0515"/>
<dbReference type="eggNOG" id="COG4476">
    <property type="taxonomic scope" value="Bacteria"/>
</dbReference>
<dbReference type="HOGENOM" id="CLU_166693_0_0_9"/>
<dbReference type="OrthoDB" id="1649074at2"/>
<dbReference type="PhylomeDB" id="A2RIM4"/>
<dbReference type="Proteomes" id="UP000000364">
    <property type="component" value="Chromosome"/>
</dbReference>
<dbReference type="Gene3D" id="1.10.220.80">
    <property type="entry name" value="BH2638-like"/>
    <property type="match status" value="1"/>
</dbReference>
<dbReference type="HAMAP" id="MF_01041">
    <property type="entry name" value="UPF0223"/>
    <property type="match status" value="1"/>
</dbReference>
<dbReference type="InterPro" id="IPR023324">
    <property type="entry name" value="BH2638-like_sf"/>
</dbReference>
<dbReference type="InterPro" id="IPR007920">
    <property type="entry name" value="UPF0223"/>
</dbReference>
<dbReference type="NCBIfam" id="NF003353">
    <property type="entry name" value="PRK04387.1"/>
    <property type="match status" value="1"/>
</dbReference>
<dbReference type="Pfam" id="PF05256">
    <property type="entry name" value="UPF0223"/>
    <property type="match status" value="1"/>
</dbReference>
<dbReference type="PIRSF" id="PIRSF037260">
    <property type="entry name" value="UPF0223"/>
    <property type="match status" value="1"/>
</dbReference>
<dbReference type="SUPFAM" id="SSF158504">
    <property type="entry name" value="BH2638-like"/>
    <property type="match status" value="1"/>
</dbReference>
<proteinExistence type="inferred from homology"/>
<name>Y515_LACLM</name>
<comment type="similarity">
    <text evidence="1">Belongs to the UPF0223 family.</text>
</comment>
<sequence>MKENYNYPLDLSWSTTEMTEVLSFFNQVEKFYESKVEKELFLESYAAFKKVVPSKMQEKQLGRDFEQSSGYSLYRALKEVEASGKRFVSADKA</sequence>
<gene>
    <name type="ordered locus">llmg_0515</name>
</gene>
<reference key="1">
    <citation type="journal article" date="2007" name="J. Bacteriol.">
        <title>The complete genome sequence of the lactic acid bacterial paradigm Lactococcus lactis subsp. cremoris MG1363.</title>
        <authorList>
            <person name="Wegmann U."/>
            <person name="O'Connell-Motherway M."/>
            <person name="Zomer A."/>
            <person name="Buist G."/>
            <person name="Shearman C."/>
            <person name="Canchaya C."/>
            <person name="Ventura M."/>
            <person name="Goesmann A."/>
            <person name="Gasson M.J."/>
            <person name="Kuipers O.P."/>
            <person name="van Sinderen D."/>
            <person name="Kok J."/>
        </authorList>
    </citation>
    <scope>NUCLEOTIDE SEQUENCE [LARGE SCALE GENOMIC DNA]</scope>
    <source>
        <strain>MG1363</strain>
    </source>
</reference>
<protein>
    <recommendedName>
        <fullName evidence="1">UPF0223 protein llmg_0515</fullName>
    </recommendedName>
</protein>
<organism>
    <name type="scientific">Lactococcus lactis subsp. cremoris (strain MG1363)</name>
    <dbReference type="NCBI Taxonomy" id="416870"/>
    <lineage>
        <taxon>Bacteria</taxon>
        <taxon>Bacillati</taxon>
        <taxon>Bacillota</taxon>
        <taxon>Bacilli</taxon>
        <taxon>Lactobacillales</taxon>
        <taxon>Streptococcaceae</taxon>
        <taxon>Lactococcus</taxon>
        <taxon>Lactococcus cremoris subsp. cremoris</taxon>
    </lineage>
</organism>
<feature type="chain" id="PRO_1000064141" description="UPF0223 protein llmg_0515">
    <location>
        <begin position="1"/>
        <end position="93"/>
    </location>
</feature>